<evidence type="ECO:0000255" key="1">
    <source>
        <dbReference type="HAMAP-Rule" id="MF_01864"/>
    </source>
</evidence>
<evidence type="ECO:0000255" key="2">
    <source>
        <dbReference type="PROSITE-ProRule" id="PRU01266"/>
    </source>
</evidence>
<feature type="chain" id="PRO_0000374270" description="tRNA-2-methylthio-N(6)-dimethylallyladenosine synthase">
    <location>
        <begin position="1"/>
        <end position="440"/>
    </location>
</feature>
<feature type="domain" description="MTTase N-terminal" evidence="1">
    <location>
        <begin position="2"/>
        <end position="118"/>
    </location>
</feature>
<feature type="domain" description="Radical SAM core" evidence="2">
    <location>
        <begin position="141"/>
        <end position="370"/>
    </location>
</feature>
<feature type="domain" description="TRAM" evidence="1">
    <location>
        <begin position="373"/>
        <end position="436"/>
    </location>
</feature>
<feature type="binding site" evidence="1">
    <location>
        <position position="11"/>
    </location>
    <ligand>
        <name>[4Fe-4S] cluster</name>
        <dbReference type="ChEBI" id="CHEBI:49883"/>
        <label>1</label>
    </ligand>
</feature>
<feature type="binding site" evidence="1">
    <location>
        <position position="47"/>
    </location>
    <ligand>
        <name>[4Fe-4S] cluster</name>
        <dbReference type="ChEBI" id="CHEBI:49883"/>
        <label>1</label>
    </ligand>
</feature>
<feature type="binding site" evidence="1">
    <location>
        <position position="81"/>
    </location>
    <ligand>
        <name>[4Fe-4S] cluster</name>
        <dbReference type="ChEBI" id="CHEBI:49883"/>
        <label>1</label>
    </ligand>
</feature>
<feature type="binding site" evidence="1">
    <location>
        <position position="155"/>
    </location>
    <ligand>
        <name>[4Fe-4S] cluster</name>
        <dbReference type="ChEBI" id="CHEBI:49883"/>
        <label>2</label>
        <note>4Fe-4S-S-AdoMet</note>
    </ligand>
</feature>
<feature type="binding site" evidence="1">
    <location>
        <position position="159"/>
    </location>
    <ligand>
        <name>[4Fe-4S] cluster</name>
        <dbReference type="ChEBI" id="CHEBI:49883"/>
        <label>2</label>
        <note>4Fe-4S-S-AdoMet</note>
    </ligand>
</feature>
<feature type="binding site" evidence="1">
    <location>
        <position position="162"/>
    </location>
    <ligand>
        <name>[4Fe-4S] cluster</name>
        <dbReference type="ChEBI" id="CHEBI:49883"/>
        <label>2</label>
        <note>4Fe-4S-S-AdoMet</note>
    </ligand>
</feature>
<reference key="1">
    <citation type="journal article" date="2014" name="Genome Announc.">
        <title>Complete Genome Sequence of the Extreme Thermophile Dictyoglomus thermophilum H-6-12.</title>
        <authorList>
            <person name="Coil D.A."/>
            <person name="Badger J.H."/>
            <person name="Forberger H.C."/>
            <person name="Riggs F."/>
            <person name="Madupu R."/>
            <person name="Fedorova N."/>
            <person name="Ward N."/>
            <person name="Robb F.T."/>
            <person name="Eisen J.A."/>
        </authorList>
    </citation>
    <scope>NUCLEOTIDE SEQUENCE [LARGE SCALE GENOMIC DNA]</scope>
    <source>
        <strain>ATCC 35947 / DSM 3960 / H-6-12</strain>
    </source>
</reference>
<name>MIAB_DICT6</name>
<keyword id="KW-0004">4Fe-4S</keyword>
<keyword id="KW-0963">Cytoplasm</keyword>
<keyword id="KW-0408">Iron</keyword>
<keyword id="KW-0411">Iron-sulfur</keyword>
<keyword id="KW-0479">Metal-binding</keyword>
<keyword id="KW-0949">S-adenosyl-L-methionine</keyword>
<keyword id="KW-0808">Transferase</keyword>
<keyword id="KW-0819">tRNA processing</keyword>
<organism>
    <name type="scientific">Dictyoglomus thermophilum (strain ATCC 35947 / DSM 3960 / H-6-12)</name>
    <dbReference type="NCBI Taxonomy" id="309799"/>
    <lineage>
        <taxon>Bacteria</taxon>
        <taxon>Pseudomonadati</taxon>
        <taxon>Dictyoglomota</taxon>
        <taxon>Dictyoglomia</taxon>
        <taxon>Dictyoglomales</taxon>
        <taxon>Dictyoglomaceae</taxon>
        <taxon>Dictyoglomus</taxon>
    </lineage>
</organism>
<comment type="function">
    <text evidence="1">Catalyzes the methylthiolation of N6-(dimethylallyl)adenosine (i(6)A), leading to the formation of 2-methylthio-N6-(dimethylallyl)adenosine (ms(2)i(6)A) at position 37 in tRNAs that read codons beginning with uridine.</text>
</comment>
<comment type="catalytic activity">
    <reaction evidence="1">
        <text>N(6)-dimethylallyladenosine(37) in tRNA + (sulfur carrier)-SH + AH2 + 2 S-adenosyl-L-methionine = 2-methylsulfanyl-N(6)-dimethylallyladenosine(37) in tRNA + (sulfur carrier)-H + 5'-deoxyadenosine + L-methionine + A + S-adenosyl-L-homocysteine + 2 H(+)</text>
        <dbReference type="Rhea" id="RHEA:37067"/>
        <dbReference type="Rhea" id="RHEA-COMP:10375"/>
        <dbReference type="Rhea" id="RHEA-COMP:10376"/>
        <dbReference type="Rhea" id="RHEA-COMP:14737"/>
        <dbReference type="Rhea" id="RHEA-COMP:14739"/>
        <dbReference type="ChEBI" id="CHEBI:13193"/>
        <dbReference type="ChEBI" id="CHEBI:15378"/>
        <dbReference type="ChEBI" id="CHEBI:17319"/>
        <dbReference type="ChEBI" id="CHEBI:17499"/>
        <dbReference type="ChEBI" id="CHEBI:29917"/>
        <dbReference type="ChEBI" id="CHEBI:57844"/>
        <dbReference type="ChEBI" id="CHEBI:57856"/>
        <dbReference type="ChEBI" id="CHEBI:59789"/>
        <dbReference type="ChEBI" id="CHEBI:64428"/>
        <dbReference type="ChEBI" id="CHEBI:74415"/>
        <dbReference type="ChEBI" id="CHEBI:74417"/>
        <dbReference type="EC" id="2.8.4.3"/>
    </reaction>
</comment>
<comment type="cofactor">
    <cofactor evidence="1">
        <name>[4Fe-4S] cluster</name>
        <dbReference type="ChEBI" id="CHEBI:49883"/>
    </cofactor>
    <text evidence="1">Binds 2 [4Fe-4S] clusters. One cluster is coordinated with 3 cysteines and an exchangeable S-adenosyl-L-methionine.</text>
</comment>
<comment type="subunit">
    <text evidence="1">Monomer.</text>
</comment>
<comment type="subcellular location">
    <subcellularLocation>
        <location evidence="1">Cytoplasm</location>
    </subcellularLocation>
</comment>
<comment type="similarity">
    <text evidence="1">Belongs to the methylthiotransferase family. MiaB subfamily.</text>
</comment>
<accession>B5YE40</accession>
<dbReference type="EC" id="2.8.4.3" evidence="1"/>
<dbReference type="EMBL" id="CP001146">
    <property type="protein sequence ID" value="ACI19050.1"/>
    <property type="molecule type" value="Genomic_DNA"/>
</dbReference>
<dbReference type="RefSeq" id="WP_012547682.1">
    <property type="nucleotide sequence ID" value="NC_011297.1"/>
</dbReference>
<dbReference type="SMR" id="B5YE40"/>
<dbReference type="STRING" id="309799.DICTH_0940"/>
<dbReference type="PaxDb" id="309799-DICTH_0940"/>
<dbReference type="KEGG" id="dth:DICTH_0940"/>
<dbReference type="eggNOG" id="COG0621">
    <property type="taxonomic scope" value="Bacteria"/>
</dbReference>
<dbReference type="HOGENOM" id="CLU_018697_2_0_0"/>
<dbReference type="OrthoDB" id="9805215at2"/>
<dbReference type="Proteomes" id="UP000001733">
    <property type="component" value="Chromosome"/>
</dbReference>
<dbReference type="GO" id="GO:0005829">
    <property type="term" value="C:cytosol"/>
    <property type="evidence" value="ECO:0007669"/>
    <property type="project" value="TreeGrafter"/>
</dbReference>
<dbReference type="GO" id="GO:0051539">
    <property type="term" value="F:4 iron, 4 sulfur cluster binding"/>
    <property type="evidence" value="ECO:0007669"/>
    <property type="project" value="UniProtKB-UniRule"/>
</dbReference>
<dbReference type="GO" id="GO:0046872">
    <property type="term" value="F:metal ion binding"/>
    <property type="evidence" value="ECO:0007669"/>
    <property type="project" value="UniProtKB-KW"/>
</dbReference>
<dbReference type="GO" id="GO:0035597">
    <property type="term" value="F:N6-isopentenyladenosine methylthiotransferase activity"/>
    <property type="evidence" value="ECO:0007669"/>
    <property type="project" value="TreeGrafter"/>
</dbReference>
<dbReference type="CDD" id="cd01335">
    <property type="entry name" value="Radical_SAM"/>
    <property type="match status" value="1"/>
</dbReference>
<dbReference type="FunFam" id="3.40.50.12160:FF:000003">
    <property type="entry name" value="CDK5 regulatory subunit-associated protein 1"/>
    <property type="match status" value="1"/>
</dbReference>
<dbReference type="FunFam" id="3.80.30.20:FF:000001">
    <property type="entry name" value="tRNA-2-methylthio-N(6)-dimethylallyladenosine synthase 2"/>
    <property type="match status" value="1"/>
</dbReference>
<dbReference type="Gene3D" id="3.40.50.12160">
    <property type="entry name" value="Methylthiotransferase, N-terminal domain"/>
    <property type="match status" value="1"/>
</dbReference>
<dbReference type="Gene3D" id="3.80.30.20">
    <property type="entry name" value="tm_1862 like domain"/>
    <property type="match status" value="1"/>
</dbReference>
<dbReference type="HAMAP" id="MF_01864">
    <property type="entry name" value="tRNA_metthiotr_MiaB"/>
    <property type="match status" value="1"/>
</dbReference>
<dbReference type="InterPro" id="IPR006638">
    <property type="entry name" value="Elp3/MiaA/NifB-like_rSAM"/>
</dbReference>
<dbReference type="InterPro" id="IPR005839">
    <property type="entry name" value="Methylthiotransferase"/>
</dbReference>
<dbReference type="InterPro" id="IPR020612">
    <property type="entry name" value="Methylthiotransferase_CS"/>
</dbReference>
<dbReference type="InterPro" id="IPR013848">
    <property type="entry name" value="Methylthiotransferase_N"/>
</dbReference>
<dbReference type="InterPro" id="IPR038135">
    <property type="entry name" value="Methylthiotransferase_N_sf"/>
</dbReference>
<dbReference type="InterPro" id="IPR006463">
    <property type="entry name" value="MiaB_methiolase"/>
</dbReference>
<dbReference type="InterPro" id="IPR007197">
    <property type="entry name" value="rSAM"/>
</dbReference>
<dbReference type="InterPro" id="IPR023404">
    <property type="entry name" value="rSAM_horseshoe"/>
</dbReference>
<dbReference type="InterPro" id="IPR002792">
    <property type="entry name" value="TRAM_dom"/>
</dbReference>
<dbReference type="NCBIfam" id="TIGR01574">
    <property type="entry name" value="miaB-methiolase"/>
    <property type="match status" value="1"/>
</dbReference>
<dbReference type="NCBIfam" id="TIGR00089">
    <property type="entry name" value="MiaB/RimO family radical SAM methylthiotransferase"/>
    <property type="match status" value="1"/>
</dbReference>
<dbReference type="PANTHER" id="PTHR43020">
    <property type="entry name" value="CDK5 REGULATORY SUBUNIT-ASSOCIATED PROTEIN 1"/>
    <property type="match status" value="1"/>
</dbReference>
<dbReference type="PANTHER" id="PTHR43020:SF2">
    <property type="entry name" value="MITOCHONDRIAL TRNA METHYLTHIOTRANSFERASE CDK5RAP1"/>
    <property type="match status" value="1"/>
</dbReference>
<dbReference type="Pfam" id="PF04055">
    <property type="entry name" value="Radical_SAM"/>
    <property type="match status" value="1"/>
</dbReference>
<dbReference type="Pfam" id="PF01938">
    <property type="entry name" value="TRAM"/>
    <property type="match status" value="1"/>
</dbReference>
<dbReference type="Pfam" id="PF00919">
    <property type="entry name" value="UPF0004"/>
    <property type="match status" value="1"/>
</dbReference>
<dbReference type="SFLD" id="SFLDF00273">
    <property type="entry name" value="(dimethylallyl)adenosine_tRNA"/>
    <property type="match status" value="1"/>
</dbReference>
<dbReference type="SFLD" id="SFLDG01082">
    <property type="entry name" value="B12-binding_domain_containing"/>
    <property type="match status" value="1"/>
</dbReference>
<dbReference type="SFLD" id="SFLDS00029">
    <property type="entry name" value="Radical_SAM"/>
    <property type="match status" value="1"/>
</dbReference>
<dbReference type="SMART" id="SM00729">
    <property type="entry name" value="Elp3"/>
    <property type="match status" value="1"/>
</dbReference>
<dbReference type="SUPFAM" id="SSF102114">
    <property type="entry name" value="Radical SAM enzymes"/>
    <property type="match status" value="1"/>
</dbReference>
<dbReference type="PROSITE" id="PS51449">
    <property type="entry name" value="MTTASE_N"/>
    <property type="match status" value="1"/>
</dbReference>
<dbReference type="PROSITE" id="PS01278">
    <property type="entry name" value="MTTASE_RADICAL"/>
    <property type="match status" value="1"/>
</dbReference>
<dbReference type="PROSITE" id="PS51918">
    <property type="entry name" value="RADICAL_SAM"/>
    <property type="match status" value="1"/>
</dbReference>
<dbReference type="PROSITE" id="PS50926">
    <property type="entry name" value="TRAM"/>
    <property type="match status" value="1"/>
</dbReference>
<sequence>MPKYYIITYGCQMNKSDSEKVAGILENLGYTPSEKMEEADIILLNTCSVRERAEEKVFGKLGELRKLKKRNQNLLIGIFGCMAQRMKEELIEKFPHVDFVLGSYKFTELPKILESLDGKKKVVLAEDIPSPQDVDFRVIKRENKFQAWIPIIYGCNNFCTYCIVPYLRGREKSRDPEEIIREVEYLASQGVVEVTLLGQNVDSYGKDLGNVDLADLLVEIHRIPRIKRIRFLTSHPRDVSDKLIRVVATHPKVCPHWHLPLQAGSDRILRRMGRGYTYSEYKALIEKIRAEIPKASFSTDIIVGFPGEEEEDFLATRRALEEIKFDTVNLAIYSKRPGTPAANYEDLIPYETKKRWFDELENLQRKIIYEKNLSRVGKEEIVLAEEVNPKNPRELSGRTENYRLVFFEAEKELIGKFLLVKITEARLWSLKGEVIREVDL</sequence>
<proteinExistence type="inferred from homology"/>
<protein>
    <recommendedName>
        <fullName evidence="1">tRNA-2-methylthio-N(6)-dimethylallyladenosine synthase</fullName>
        <ecNumber evidence="1">2.8.4.3</ecNumber>
    </recommendedName>
    <alternativeName>
        <fullName evidence="1">(Dimethylallyl)adenosine tRNA methylthiotransferase MiaB</fullName>
    </alternativeName>
    <alternativeName>
        <fullName evidence="1">tRNA-i(6)A37 methylthiotransferase</fullName>
    </alternativeName>
</protein>
<gene>
    <name evidence="1" type="primary">miaB</name>
    <name type="ordered locus">DICTH_0940</name>
</gene>